<reference key="1">
    <citation type="journal article" date="2003" name="Mol. Microbiol.">
        <title>Genome-based analysis of virulence genes in a non-biofilm-forming Staphylococcus epidermidis strain (ATCC 12228).</title>
        <authorList>
            <person name="Zhang Y.-Q."/>
            <person name="Ren S.-X."/>
            <person name="Li H.-L."/>
            <person name="Wang Y.-X."/>
            <person name="Fu G."/>
            <person name="Yang J."/>
            <person name="Qin Z.-Q."/>
            <person name="Miao Y.-G."/>
            <person name="Wang W.-Y."/>
            <person name="Chen R.-S."/>
            <person name="Shen Y."/>
            <person name="Chen Z."/>
            <person name="Yuan Z.-H."/>
            <person name="Zhao G.-P."/>
            <person name="Qu D."/>
            <person name="Danchin A."/>
            <person name="Wen Y.-M."/>
        </authorList>
    </citation>
    <scope>NUCLEOTIDE SEQUENCE [LARGE SCALE GENOMIC DNA]</scope>
    <source>
        <strain>ATCC 12228 / FDA PCI 1200</strain>
    </source>
</reference>
<organism>
    <name type="scientific">Staphylococcus epidermidis (strain ATCC 12228 / FDA PCI 1200)</name>
    <dbReference type="NCBI Taxonomy" id="176280"/>
    <lineage>
        <taxon>Bacteria</taxon>
        <taxon>Bacillati</taxon>
        <taxon>Bacillota</taxon>
        <taxon>Bacilli</taxon>
        <taxon>Bacillales</taxon>
        <taxon>Staphylococcaceae</taxon>
        <taxon>Staphylococcus</taxon>
    </lineage>
</organism>
<name>SYC_STAES</name>
<keyword id="KW-0030">Aminoacyl-tRNA synthetase</keyword>
<keyword id="KW-0067">ATP-binding</keyword>
<keyword id="KW-0963">Cytoplasm</keyword>
<keyword id="KW-0436">Ligase</keyword>
<keyword id="KW-0479">Metal-binding</keyword>
<keyword id="KW-0547">Nucleotide-binding</keyword>
<keyword id="KW-0648">Protein biosynthesis</keyword>
<keyword id="KW-0862">Zinc</keyword>
<comment type="catalytic activity">
    <reaction evidence="1">
        <text>tRNA(Cys) + L-cysteine + ATP = L-cysteinyl-tRNA(Cys) + AMP + diphosphate</text>
        <dbReference type="Rhea" id="RHEA:17773"/>
        <dbReference type="Rhea" id="RHEA-COMP:9661"/>
        <dbReference type="Rhea" id="RHEA-COMP:9679"/>
        <dbReference type="ChEBI" id="CHEBI:30616"/>
        <dbReference type="ChEBI" id="CHEBI:33019"/>
        <dbReference type="ChEBI" id="CHEBI:35235"/>
        <dbReference type="ChEBI" id="CHEBI:78442"/>
        <dbReference type="ChEBI" id="CHEBI:78517"/>
        <dbReference type="ChEBI" id="CHEBI:456215"/>
        <dbReference type="EC" id="6.1.1.16"/>
    </reaction>
</comment>
<comment type="cofactor">
    <cofactor evidence="1">
        <name>Zn(2+)</name>
        <dbReference type="ChEBI" id="CHEBI:29105"/>
    </cofactor>
    <text evidence="1">Binds 1 zinc ion per subunit.</text>
</comment>
<comment type="subunit">
    <text evidence="1">Monomer.</text>
</comment>
<comment type="subcellular location">
    <subcellularLocation>
        <location evidence="1">Cytoplasm</location>
    </subcellularLocation>
</comment>
<comment type="similarity">
    <text evidence="1">Belongs to the class-I aminoacyl-tRNA synthetase family.</text>
</comment>
<protein>
    <recommendedName>
        <fullName evidence="1">Cysteine--tRNA ligase</fullName>
        <ecNumber evidence="1">6.1.1.16</ecNumber>
    </recommendedName>
    <alternativeName>
        <fullName evidence="1">Cysteinyl-tRNA synthetase</fullName>
        <shortName evidence="1">CysRS</shortName>
    </alternativeName>
</protein>
<proteinExistence type="inferred from homology"/>
<feature type="chain" id="PRO_0000159483" description="Cysteine--tRNA ligase">
    <location>
        <begin position="1"/>
        <end position="466"/>
    </location>
</feature>
<feature type="short sequence motif" description="'HIGH' region">
    <location>
        <begin position="30"/>
        <end position="40"/>
    </location>
</feature>
<feature type="short sequence motif" description="'KMSKS' region">
    <location>
        <begin position="265"/>
        <end position="269"/>
    </location>
</feature>
<feature type="binding site" evidence="1">
    <location>
        <position position="28"/>
    </location>
    <ligand>
        <name>Zn(2+)</name>
        <dbReference type="ChEBI" id="CHEBI:29105"/>
    </ligand>
</feature>
<feature type="binding site" evidence="1">
    <location>
        <position position="208"/>
    </location>
    <ligand>
        <name>Zn(2+)</name>
        <dbReference type="ChEBI" id="CHEBI:29105"/>
    </ligand>
</feature>
<feature type="binding site" evidence="1">
    <location>
        <position position="233"/>
    </location>
    <ligand>
        <name>Zn(2+)</name>
        <dbReference type="ChEBI" id="CHEBI:29105"/>
    </ligand>
</feature>
<feature type="binding site" evidence="1">
    <location>
        <position position="237"/>
    </location>
    <ligand>
        <name>Zn(2+)</name>
        <dbReference type="ChEBI" id="CHEBI:29105"/>
    </ligand>
</feature>
<feature type="binding site" evidence="1">
    <location>
        <position position="268"/>
    </location>
    <ligand>
        <name>ATP</name>
        <dbReference type="ChEBI" id="CHEBI:30616"/>
    </ligand>
</feature>
<accession>Q8CTU1</accession>
<gene>
    <name evidence="1" type="primary">cysS</name>
    <name type="ordered locus">SE_0292</name>
</gene>
<evidence type="ECO:0000255" key="1">
    <source>
        <dbReference type="HAMAP-Rule" id="MF_00041"/>
    </source>
</evidence>
<dbReference type="EC" id="6.1.1.16" evidence="1"/>
<dbReference type="EMBL" id="AE015929">
    <property type="protein sequence ID" value="AAO03889.1"/>
    <property type="molecule type" value="Genomic_DNA"/>
</dbReference>
<dbReference type="RefSeq" id="NP_763847.1">
    <property type="nucleotide sequence ID" value="NC_004461.1"/>
</dbReference>
<dbReference type="RefSeq" id="WP_002445731.1">
    <property type="nucleotide sequence ID" value="NZ_WBME01000014.1"/>
</dbReference>
<dbReference type="SMR" id="Q8CTU1"/>
<dbReference type="KEGG" id="sep:SE_0292"/>
<dbReference type="PATRIC" id="fig|176280.10.peg.268"/>
<dbReference type="eggNOG" id="COG0215">
    <property type="taxonomic scope" value="Bacteria"/>
</dbReference>
<dbReference type="HOGENOM" id="CLU_013528_0_1_9"/>
<dbReference type="OrthoDB" id="9815130at2"/>
<dbReference type="Proteomes" id="UP000001411">
    <property type="component" value="Chromosome"/>
</dbReference>
<dbReference type="GO" id="GO:0005829">
    <property type="term" value="C:cytosol"/>
    <property type="evidence" value="ECO:0007669"/>
    <property type="project" value="TreeGrafter"/>
</dbReference>
<dbReference type="GO" id="GO:0005524">
    <property type="term" value="F:ATP binding"/>
    <property type="evidence" value="ECO:0007669"/>
    <property type="project" value="UniProtKB-UniRule"/>
</dbReference>
<dbReference type="GO" id="GO:0004817">
    <property type="term" value="F:cysteine-tRNA ligase activity"/>
    <property type="evidence" value="ECO:0007669"/>
    <property type="project" value="UniProtKB-UniRule"/>
</dbReference>
<dbReference type="GO" id="GO:0008270">
    <property type="term" value="F:zinc ion binding"/>
    <property type="evidence" value="ECO:0007669"/>
    <property type="project" value="UniProtKB-UniRule"/>
</dbReference>
<dbReference type="GO" id="GO:0006423">
    <property type="term" value="P:cysteinyl-tRNA aminoacylation"/>
    <property type="evidence" value="ECO:0007669"/>
    <property type="project" value="UniProtKB-UniRule"/>
</dbReference>
<dbReference type="CDD" id="cd00672">
    <property type="entry name" value="CysRS_core"/>
    <property type="match status" value="1"/>
</dbReference>
<dbReference type="FunFam" id="3.40.50.620:FF:000009">
    <property type="entry name" value="Cysteine--tRNA ligase"/>
    <property type="match status" value="1"/>
</dbReference>
<dbReference type="Gene3D" id="1.20.120.1910">
    <property type="entry name" value="Cysteine-tRNA ligase, C-terminal anti-codon recognition domain"/>
    <property type="match status" value="1"/>
</dbReference>
<dbReference type="Gene3D" id="3.40.50.620">
    <property type="entry name" value="HUPs"/>
    <property type="match status" value="1"/>
</dbReference>
<dbReference type="HAMAP" id="MF_00041">
    <property type="entry name" value="Cys_tRNA_synth"/>
    <property type="match status" value="1"/>
</dbReference>
<dbReference type="InterPro" id="IPR015803">
    <property type="entry name" value="Cys-tRNA-ligase"/>
</dbReference>
<dbReference type="InterPro" id="IPR015273">
    <property type="entry name" value="Cys-tRNA-synt_Ia_DALR"/>
</dbReference>
<dbReference type="InterPro" id="IPR024909">
    <property type="entry name" value="Cys-tRNA/MSH_ligase"/>
</dbReference>
<dbReference type="InterPro" id="IPR056411">
    <property type="entry name" value="CysS_C"/>
</dbReference>
<dbReference type="InterPro" id="IPR014729">
    <property type="entry name" value="Rossmann-like_a/b/a_fold"/>
</dbReference>
<dbReference type="InterPro" id="IPR032678">
    <property type="entry name" value="tRNA-synt_1_cat_dom"/>
</dbReference>
<dbReference type="InterPro" id="IPR009080">
    <property type="entry name" value="tRNAsynth_Ia_anticodon-bd"/>
</dbReference>
<dbReference type="NCBIfam" id="TIGR00435">
    <property type="entry name" value="cysS"/>
    <property type="match status" value="1"/>
</dbReference>
<dbReference type="PANTHER" id="PTHR10890:SF3">
    <property type="entry name" value="CYSTEINE--TRNA LIGASE, CYTOPLASMIC"/>
    <property type="match status" value="1"/>
</dbReference>
<dbReference type="PANTHER" id="PTHR10890">
    <property type="entry name" value="CYSTEINYL-TRNA SYNTHETASE"/>
    <property type="match status" value="1"/>
</dbReference>
<dbReference type="Pfam" id="PF23493">
    <property type="entry name" value="CysS_C"/>
    <property type="match status" value="1"/>
</dbReference>
<dbReference type="Pfam" id="PF09190">
    <property type="entry name" value="DALR_2"/>
    <property type="match status" value="1"/>
</dbReference>
<dbReference type="Pfam" id="PF01406">
    <property type="entry name" value="tRNA-synt_1e"/>
    <property type="match status" value="1"/>
</dbReference>
<dbReference type="PRINTS" id="PR00983">
    <property type="entry name" value="TRNASYNTHCYS"/>
</dbReference>
<dbReference type="SMART" id="SM00840">
    <property type="entry name" value="DALR_2"/>
    <property type="match status" value="1"/>
</dbReference>
<dbReference type="SUPFAM" id="SSF47323">
    <property type="entry name" value="Anticodon-binding domain of a subclass of class I aminoacyl-tRNA synthetases"/>
    <property type="match status" value="1"/>
</dbReference>
<dbReference type="SUPFAM" id="SSF52374">
    <property type="entry name" value="Nucleotidylyl transferase"/>
    <property type="match status" value="1"/>
</dbReference>
<sequence length="466" mass="53930">MITLYNTLTRRKETFEPIEPGKVKMYVCGPTVYNYIHIGNARPAINYDVVRRYFEYKGYEVIYVSNFTDVDDKLINRSKELNESVPEIAEKYIKAFYEDVGALNVKKATSNPRVMHHMGEIIDFIKELVDEGYAYESDGDVYFRTRQFDGYGKLSHQSLDDLKVGARIEAGEQKEDALDFTLWKKAKPGEISWNSPFGKGRPGWHIECSVMAYHELGSTIDIHAGGSDLQFPHHENEIAQSEAHNHAPFANYWMHNGFINIDNEKMSKSLGNFILVHDIIKEVDPDVLRFFMISVHYRSPINYNLELVGAARSGLERIRNSYKLIEEREQIASDLEEQSEYIQQIDKILNQFETVMDDDFNTANAVTAWYDLAKLANKYVLENTTSTKVLNRFKEVYSIFSDVLGVPLKSKETEELLDEDIEQLIEERNEARKNKDFARADEIRDMLKARHIILEDTPQGVRFKRG</sequence>